<sequence length="241" mass="24624">MRHTRFHPIKLAWITAVVAGLMVGVATPADAEPGQWDPTLPALVSAGAPGDPLAVANASLQATAQATQTTLDLGRQFLGGLGINLGGPAASAPSAATTGASRIPRANARQAVEYVIRRAGSQMGVPYSWGGGSLQGPSKGVDSGANTVGFDCSGLVRYAFAGVGVLIPRFSGDQYNAGRHVPPAEAKRGDLIFYGPGGGQHVTLYLGNGQMLEASGSAGKVTVSPVRKAGMTPFVTRIIEY</sequence>
<comment type="function">
    <text evidence="1">Peptidoglycan endopeptidase that cleaves the bond between D-glutamate and meso-diaminopimelate. Binds high-molecular weight peptidoglycan, but does not degrade it. Required for normal separation of daughter cells after cell division and cell wall integrity. Required for host cell invasion (By similarity).</text>
</comment>
<comment type="subunit">
    <text evidence="1">Monomer.</text>
</comment>
<comment type="similarity">
    <text evidence="3 4">Belongs to the peptidase C40 family.</text>
</comment>
<accession>P9WHU4</accession>
<accession>L0T9R3</accession>
<accession>O53169</accession>
<accession>Q7D8D5</accession>
<gene>
    <name type="primary">ripB</name>
    <name type="ordered locus">MT1525</name>
</gene>
<feature type="signal peptide" evidence="2">
    <location>
        <begin position="1"/>
        <end position="31"/>
    </location>
</feature>
<feature type="chain" id="PRO_0000428121" description="Peptidoglycan endopeptidase RipB">
    <location>
        <begin position="32"/>
        <end position="241"/>
    </location>
</feature>
<feature type="domain" description="NlpC/P60" evidence="3">
    <location>
        <begin position="109"/>
        <end position="241"/>
    </location>
</feature>
<feature type="active site" description="Nucleophile" evidence="3">
    <location>
        <position position="152"/>
    </location>
</feature>
<feature type="active site" description="Proton acceptor" evidence="3">
    <location>
        <position position="201"/>
    </location>
</feature>
<feature type="active site" evidence="3">
    <location>
        <position position="213"/>
    </location>
</feature>
<protein>
    <recommendedName>
        <fullName>Peptidoglycan endopeptidase RipB</fullName>
        <ecNumber>3.4.-.-</ecNumber>
    </recommendedName>
    <alternativeName>
        <fullName>Macrophage invasion and intracellular persistence protein B</fullName>
    </alternativeName>
    <alternativeName>
        <fullName>Resuscitation-promoting factor interaction partner B</fullName>
        <shortName>Rpf-interacting protein B</shortName>
    </alternativeName>
</protein>
<name>RIPB_MYCTO</name>
<reference key="1">
    <citation type="journal article" date="2002" name="J. Bacteriol.">
        <title>Whole-genome comparison of Mycobacterium tuberculosis clinical and laboratory strains.</title>
        <authorList>
            <person name="Fleischmann R.D."/>
            <person name="Alland D."/>
            <person name="Eisen J.A."/>
            <person name="Carpenter L."/>
            <person name="White O."/>
            <person name="Peterson J.D."/>
            <person name="DeBoy R.T."/>
            <person name="Dodson R.J."/>
            <person name="Gwinn M.L."/>
            <person name="Haft D.H."/>
            <person name="Hickey E.K."/>
            <person name="Kolonay J.F."/>
            <person name="Nelson W.C."/>
            <person name="Umayam L.A."/>
            <person name="Ermolaeva M.D."/>
            <person name="Salzberg S.L."/>
            <person name="Delcher A."/>
            <person name="Utterback T.R."/>
            <person name="Weidman J.F."/>
            <person name="Khouri H.M."/>
            <person name="Gill J."/>
            <person name="Mikula A."/>
            <person name="Bishai W."/>
            <person name="Jacobs W.R. Jr."/>
            <person name="Venter J.C."/>
            <person name="Fraser C.M."/>
        </authorList>
    </citation>
    <scope>NUCLEOTIDE SEQUENCE [LARGE SCALE GENOMIC DNA]</scope>
    <source>
        <strain>CDC 1551 / Oshkosh</strain>
    </source>
</reference>
<proteinExistence type="inferred from homology"/>
<keyword id="KW-0961">Cell wall biogenesis/degradation</keyword>
<keyword id="KW-0378">Hydrolase</keyword>
<keyword id="KW-0645">Protease</keyword>
<keyword id="KW-1185">Reference proteome</keyword>
<keyword id="KW-0732">Signal</keyword>
<keyword id="KW-0788">Thiol protease</keyword>
<organism>
    <name type="scientific">Mycobacterium tuberculosis (strain CDC 1551 / Oshkosh)</name>
    <dbReference type="NCBI Taxonomy" id="83331"/>
    <lineage>
        <taxon>Bacteria</taxon>
        <taxon>Bacillati</taxon>
        <taxon>Actinomycetota</taxon>
        <taxon>Actinomycetes</taxon>
        <taxon>Mycobacteriales</taxon>
        <taxon>Mycobacteriaceae</taxon>
        <taxon>Mycobacterium</taxon>
        <taxon>Mycobacterium tuberculosis complex</taxon>
    </lineage>
</organism>
<dbReference type="EC" id="3.4.-.-"/>
<dbReference type="EMBL" id="AE000516">
    <property type="protein sequence ID" value="AAK45790.1"/>
    <property type="molecule type" value="Genomic_DNA"/>
</dbReference>
<dbReference type="PIR" id="A70874">
    <property type="entry name" value="A70874"/>
</dbReference>
<dbReference type="RefSeq" id="WP_003407525.1">
    <property type="nucleotide sequence ID" value="NZ_KK341227.1"/>
</dbReference>
<dbReference type="SMR" id="P9WHU4"/>
<dbReference type="MEROPS" id="C40.012"/>
<dbReference type="GeneID" id="45425457"/>
<dbReference type="KEGG" id="mtc:MT1525"/>
<dbReference type="PATRIC" id="fig|83331.31.peg.1640"/>
<dbReference type="HOGENOM" id="CLU_100951_0_0_11"/>
<dbReference type="Proteomes" id="UP000001020">
    <property type="component" value="Chromosome"/>
</dbReference>
<dbReference type="GO" id="GO:0008234">
    <property type="term" value="F:cysteine-type peptidase activity"/>
    <property type="evidence" value="ECO:0007669"/>
    <property type="project" value="UniProtKB-KW"/>
</dbReference>
<dbReference type="GO" id="GO:0071555">
    <property type="term" value="P:cell wall organization"/>
    <property type="evidence" value="ECO:0007669"/>
    <property type="project" value="UniProtKB-KW"/>
</dbReference>
<dbReference type="GO" id="GO:0006508">
    <property type="term" value="P:proteolysis"/>
    <property type="evidence" value="ECO:0007669"/>
    <property type="project" value="UniProtKB-KW"/>
</dbReference>
<dbReference type="FunFam" id="3.90.1720.10:FF:000010">
    <property type="entry name" value="Peptidoglycan endopeptidase RipA"/>
    <property type="match status" value="1"/>
</dbReference>
<dbReference type="Gene3D" id="3.90.1720.10">
    <property type="entry name" value="endopeptidase domain like (from Nostoc punctiforme)"/>
    <property type="match status" value="1"/>
</dbReference>
<dbReference type="InterPro" id="IPR000064">
    <property type="entry name" value="NLP_P60_dom"/>
</dbReference>
<dbReference type="InterPro" id="IPR038765">
    <property type="entry name" value="Papain-like_cys_pep_sf"/>
</dbReference>
<dbReference type="InterPro" id="IPR051794">
    <property type="entry name" value="PG_Endopeptidase_C40"/>
</dbReference>
<dbReference type="InterPro" id="IPR049729">
    <property type="entry name" value="RipB"/>
</dbReference>
<dbReference type="NCBIfam" id="NF033742">
    <property type="entry name" value="NlpC_p60_RipB"/>
    <property type="match status" value="1"/>
</dbReference>
<dbReference type="PANTHER" id="PTHR47359:SF3">
    <property type="entry name" value="NLP_P60 DOMAIN-CONTAINING PROTEIN-RELATED"/>
    <property type="match status" value="1"/>
</dbReference>
<dbReference type="PANTHER" id="PTHR47359">
    <property type="entry name" value="PEPTIDOGLYCAN DL-ENDOPEPTIDASE CWLO"/>
    <property type="match status" value="1"/>
</dbReference>
<dbReference type="Pfam" id="PF00877">
    <property type="entry name" value="NLPC_P60"/>
    <property type="match status" value="1"/>
</dbReference>
<dbReference type="SUPFAM" id="SSF54001">
    <property type="entry name" value="Cysteine proteinases"/>
    <property type="match status" value="1"/>
</dbReference>
<dbReference type="PROSITE" id="PS51935">
    <property type="entry name" value="NLPC_P60"/>
    <property type="match status" value="1"/>
</dbReference>
<evidence type="ECO:0000250" key="1"/>
<evidence type="ECO:0000255" key="2"/>
<evidence type="ECO:0000255" key="3">
    <source>
        <dbReference type="PROSITE-ProRule" id="PRU01284"/>
    </source>
</evidence>
<evidence type="ECO:0000305" key="4"/>